<organism>
    <name type="scientific">Bacillus anthracis</name>
    <dbReference type="NCBI Taxonomy" id="1392"/>
    <lineage>
        <taxon>Bacteria</taxon>
        <taxon>Bacillati</taxon>
        <taxon>Bacillota</taxon>
        <taxon>Bacilli</taxon>
        <taxon>Bacillales</taxon>
        <taxon>Bacillaceae</taxon>
        <taxon>Bacillus</taxon>
        <taxon>Bacillus cereus group</taxon>
    </lineage>
</organism>
<keyword id="KW-0002">3D-structure</keyword>
<keyword id="KW-0031">Aminopeptidase</keyword>
<keyword id="KW-0963">Cytoplasm</keyword>
<keyword id="KW-0378">Hydrolase</keyword>
<keyword id="KW-0479">Metal-binding</keyword>
<keyword id="KW-0482">Metalloprotease</keyword>
<keyword id="KW-0645">Protease</keyword>
<keyword id="KW-1185">Reference proteome</keyword>
<keyword id="KW-0862">Zinc</keyword>
<feature type="chain" id="PRO_0000185277" description="Peptidase T">
    <location>
        <begin position="1"/>
        <end position="410"/>
    </location>
</feature>
<feature type="active site" evidence="1">
    <location>
        <position position="81"/>
    </location>
</feature>
<feature type="active site" description="Proton acceptor" evidence="1">
    <location>
        <position position="176"/>
    </location>
</feature>
<feature type="binding site" evidence="1">
    <location>
        <position position="79"/>
    </location>
    <ligand>
        <name>Zn(2+)</name>
        <dbReference type="ChEBI" id="CHEBI:29105"/>
        <label>1</label>
    </ligand>
</feature>
<feature type="binding site" evidence="1">
    <location>
        <position position="142"/>
    </location>
    <ligand>
        <name>Zn(2+)</name>
        <dbReference type="ChEBI" id="CHEBI:29105"/>
        <label>1</label>
    </ligand>
</feature>
<feature type="binding site" evidence="1">
    <location>
        <position position="142"/>
    </location>
    <ligand>
        <name>Zn(2+)</name>
        <dbReference type="ChEBI" id="CHEBI:29105"/>
        <label>2</label>
    </ligand>
</feature>
<feature type="binding site" evidence="1">
    <location>
        <position position="177"/>
    </location>
    <ligand>
        <name>Zn(2+)</name>
        <dbReference type="ChEBI" id="CHEBI:29105"/>
        <label>2</label>
    </ligand>
</feature>
<feature type="binding site" evidence="1">
    <location>
        <position position="199"/>
    </location>
    <ligand>
        <name>Zn(2+)</name>
        <dbReference type="ChEBI" id="CHEBI:29105"/>
        <label>1</label>
    </ligand>
</feature>
<feature type="binding site" evidence="1">
    <location>
        <position position="381"/>
    </location>
    <ligand>
        <name>Zn(2+)</name>
        <dbReference type="ChEBI" id="CHEBI:29105"/>
        <label>2</label>
    </ligand>
</feature>
<feature type="helix" evidence="2">
    <location>
        <begin position="1"/>
        <end position="13"/>
    </location>
</feature>
<feature type="strand" evidence="2">
    <location>
        <begin position="25"/>
        <end position="29"/>
    </location>
</feature>
<feature type="helix" evidence="2">
    <location>
        <begin position="30"/>
        <end position="46"/>
    </location>
</feature>
<feature type="strand" evidence="2">
    <location>
        <begin position="49"/>
        <end position="53"/>
    </location>
</feature>
<feature type="strand" evidence="2">
    <location>
        <begin position="59"/>
        <end position="63"/>
    </location>
</feature>
<feature type="strand" evidence="2">
    <location>
        <begin position="66"/>
        <end position="69"/>
    </location>
</feature>
<feature type="strand" evidence="2">
    <location>
        <begin position="74"/>
        <end position="79"/>
    </location>
</feature>
<feature type="strand" evidence="2">
    <location>
        <begin position="94"/>
        <end position="96"/>
    </location>
</feature>
<feature type="strand" evidence="2">
    <location>
        <begin position="104"/>
        <end position="107"/>
    </location>
</feature>
<feature type="turn" evidence="2">
    <location>
        <begin position="108"/>
        <end position="111"/>
    </location>
</feature>
<feature type="strand" evidence="2">
    <location>
        <begin position="112"/>
        <end position="114"/>
    </location>
</feature>
<feature type="turn" evidence="2">
    <location>
        <begin position="116"/>
        <end position="118"/>
    </location>
</feature>
<feature type="helix" evidence="2">
    <location>
        <begin position="122"/>
        <end position="125"/>
    </location>
</feature>
<feature type="strand" evidence="2">
    <location>
        <begin position="130"/>
        <end position="132"/>
    </location>
</feature>
<feature type="strand" evidence="2">
    <location>
        <begin position="135"/>
        <end position="137"/>
    </location>
</feature>
<feature type="helix" evidence="2">
    <location>
        <begin position="141"/>
        <end position="158"/>
    </location>
</feature>
<feature type="strand" evidence="2">
    <location>
        <begin position="168"/>
        <end position="174"/>
    </location>
</feature>
<feature type="turn" evidence="2">
    <location>
        <begin position="176"/>
        <end position="179"/>
    </location>
</feature>
<feature type="helix" evidence="2">
    <location>
        <begin position="182"/>
        <end position="184"/>
    </location>
</feature>
<feature type="helix" evidence="2">
    <location>
        <begin position="187"/>
        <end position="190"/>
    </location>
</feature>
<feature type="strand" evidence="2">
    <location>
        <begin position="193"/>
        <end position="197"/>
    </location>
</feature>
<feature type="strand" evidence="2">
    <location>
        <begin position="205"/>
        <end position="207"/>
    </location>
</feature>
<feature type="strand" evidence="2">
    <location>
        <begin position="212"/>
        <end position="221"/>
    </location>
</feature>
<feature type="helix" evidence="2">
    <location>
        <begin position="227"/>
        <end position="229"/>
    </location>
</feature>
<feature type="turn" evidence="2">
    <location>
        <begin position="231"/>
        <end position="233"/>
    </location>
</feature>
<feature type="helix" evidence="2">
    <location>
        <begin position="237"/>
        <end position="246"/>
    </location>
</feature>
<feature type="helix" evidence="2">
    <location>
        <begin position="254"/>
        <end position="256"/>
    </location>
</feature>
<feature type="strand" evidence="2">
    <location>
        <begin position="263"/>
        <end position="271"/>
    </location>
</feature>
<feature type="strand" evidence="2">
    <location>
        <begin position="273"/>
        <end position="286"/>
    </location>
</feature>
<feature type="helix" evidence="2">
    <location>
        <begin position="287"/>
        <end position="308"/>
    </location>
</feature>
<feature type="helix" evidence="2">
    <location>
        <begin position="310"/>
        <end position="312"/>
    </location>
</feature>
<feature type="strand" evidence="2">
    <location>
        <begin position="313"/>
        <end position="321"/>
    </location>
</feature>
<feature type="helix" evidence="2">
    <location>
        <begin position="325"/>
        <end position="328"/>
    </location>
</feature>
<feature type="helix" evidence="2">
    <location>
        <begin position="329"/>
        <end position="332"/>
    </location>
</feature>
<feature type="helix" evidence="2">
    <location>
        <begin position="333"/>
        <end position="344"/>
    </location>
</feature>
<feature type="strand" evidence="2">
    <location>
        <begin position="354"/>
        <end position="356"/>
    </location>
</feature>
<feature type="helix" evidence="2">
    <location>
        <begin position="359"/>
        <end position="365"/>
    </location>
</feature>
<feature type="strand" evidence="2">
    <location>
        <begin position="376"/>
        <end position="379"/>
    </location>
</feature>
<feature type="strand" evidence="2">
    <location>
        <begin position="386"/>
        <end position="388"/>
    </location>
</feature>
<feature type="helix" evidence="2">
    <location>
        <begin position="389"/>
        <end position="409"/>
    </location>
</feature>
<comment type="function">
    <text evidence="1">Cleaves the N-terminal amino acid of tripeptides.</text>
</comment>
<comment type="catalytic activity">
    <reaction evidence="1">
        <text>Release of the N-terminal residue from a tripeptide.</text>
        <dbReference type="EC" id="3.4.11.4"/>
    </reaction>
</comment>
<comment type="cofactor">
    <cofactor evidence="1">
        <name>Zn(2+)</name>
        <dbReference type="ChEBI" id="CHEBI:29105"/>
    </cofactor>
    <text evidence="1">Binds 2 Zn(2+) ions per subunit.</text>
</comment>
<comment type="subcellular location">
    <subcellularLocation>
        <location evidence="1">Cytoplasm</location>
    </subcellularLocation>
</comment>
<comment type="similarity">
    <text evidence="1">Belongs to the peptidase M20B family.</text>
</comment>
<sequence length="410" mass="45911">MKEELIERFTRYVKIDTQSNEDSHTVPTTPGQIEFGKLLVEELKEVGLTEVTMDDNGYVMATLPANTDKDVPVIGFLAHLDTATDFTGKNVKPQIHENFDGNAITLNEELNIVLTPEQFPELPSYKGHTIITTDGTTLLGADDKAGLTEIMVAMNYLIHNPQIKHGKIRVAFTPDEEIGRGPAHFDVEAFGASFAYMMDGGPLGGLEYESFNAAGAKLTFNGTNTHPGTAKNKMRNATKLAMEFNGHLPVEEAPEYTEGYEGFYHLLSLNGDVEQSKAYYIIRDFDRKNFEARKNTIENIVKQMQEKYGQDAVVLEMNDQYYNMLEKIEPVREIVDIAYEAMKSLNIEPNIHPIRGGTDGSQLSYMGLPTPNIFTGGENYHGKFEYVSVDVMEKAVQVIIEIARRFEEQA</sequence>
<name>PEPT_BACAN</name>
<accession>Q81WU4</accession>
<accession>Q6HUZ7</accession>
<accession>Q6KP72</accession>
<dbReference type="EC" id="3.4.11.4" evidence="1"/>
<dbReference type="EMBL" id="AE016879">
    <property type="protein sequence ID" value="AAP27607.1"/>
    <property type="molecule type" value="Genomic_DNA"/>
</dbReference>
<dbReference type="EMBL" id="AE017334">
    <property type="protein sequence ID" value="AAT32987.1"/>
    <property type="molecule type" value="Genomic_DNA"/>
</dbReference>
<dbReference type="EMBL" id="AE017225">
    <property type="protein sequence ID" value="AAT55892.1"/>
    <property type="molecule type" value="Genomic_DNA"/>
</dbReference>
<dbReference type="RefSeq" id="NP_846121.1">
    <property type="nucleotide sequence ID" value="NC_003997.3"/>
</dbReference>
<dbReference type="RefSeq" id="WP_000656974.1">
    <property type="nucleotide sequence ID" value="NZ_WXXJ01000001.1"/>
</dbReference>
<dbReference type="RefSeq" id="YP_029841.1">
    <property type="nucleotide sequence ID" value="NC_005945.1"/>
</dbReference>
<dbReference type="PDB" id="3IFE">
    <property type="method" value="X-ray"/>
    <property type="resolution" value="1.55 A"/>
    <property type="chains" value="A=1-410"/>
</dbReference>
<dbReference type="PDBsum" id="3IFE"/>
<dbReference type="SMR" id="Q81WU4"/>
<dbReference type="IntAct" id="Q81WU4">
    <property type="interactions" value="5"/>
</dbReference>
<dbReference type="STRING" id="261594.GBAA_3872"/>
<dbReference type="MEROPS" id="M20.003"/>
<dbReference type="DNASU" id="1088747"/>
<dbReference type="GeneID" id="45023569"/>
<dbReference type="KEGG" id="ban:BA_3872"/>
<dbReference type="KEGG" id="banh:HYU01_18935"/>
<dbReference type="KEGG" id="bar:GBAA_3872"/>
<dbReference type="KEGG" id="bat:BAS3588"/>
<dbReference type="PATRIC" id="fig|198094.11.peg.3842"/>
<dbReference type="eggNOG" id="COG2195">
    <property type="taxonomic scope" value="Bacteria"/>
</dbReference>
<dbReference type="HOGENOM" id="CLU_053676_0_0_9"/>
<dbReference type="OMA" id="GHNFHGK"/>
<dbReference type="OrthoDB" id="9804934at2"/>
<dbReference type="EvolutionaryTrace" id="Q81WU4"/>
<dbReference type="Proteomes" id="UP000000427">
    <property type="component" value="Chromosome"/>
</dbReference>
<dbReference type="Proteomes" id="UP000000594">
    <property type="component" value="Chromosome"/>
</dbReference>
<dbReference type="GO" id="GO:0005829">
    <property type="term" value="C:cytosol"/>
    <property type="evidence" value="ECO:0007669"/>
    <property type="project" value="TreeGrafter"/>
</dbReference>
<dbReference type="GO" id="GO:0008237">
    <property type="term" value="F:metallopeptidase activity"/>
    <property type="evidence" value="ECO:0007669"/>
    <property type="project" value="UniProtKB-KW"/>
</dbReference>
<dbReference type="GO" id="GO:0045148">
    <property type="term" value="F:tripeptide aminopeptidase activity"/>
    <property type="evidence" value="ECO:0007669"/>
    <property type="project" value="UniProtKB-UniRule"/>
</dbReference>
<dbReference type="GO" id="GO:0008270">
    <property type="term" value="F:zinc ion binding"/>
    <property type="evidence" value="ECO:0007669"/>
    <property type="project" value="UniProtKB-UniRule"/>
</dbReference>
<dbReference type="GO" id="GO:0043171">
    <property type="term" value="P:peptide catabolic process"/>
    <property type="evidence" value="ECO:0007669"/>
    <property type="project" value="UniProtKB-UniRule"/>
</dbReference>
<dbReference type="GO" id="GO:0006508">
    <property type="term" value="P:proteolysis"/>
    <property type="evidence" value="ECO:0007669"/>
    <property type="project" value="UniProtKB-UniRule"/>
</dbReference>
<dbReference type="CDD" id="cd03892">
    <property type="entry name" value="M20_peptT"/>
    <property type="match status" value="1"/>
</dbReference>
<dbReference type="FunFam" id="3.30.70.360:FF:000002">
    <property type="entry name" value="Peptidase T"/>
    <property type="match status" value="1"/>
</dbReference>
<dbReference type="Gene3D" id="3.30.70.360">
    <property type="match status" value="1"/>
</dbReference>
<dbReference type="Gene3D" id="3.40.630.10">
    <property type="entry name" value="Zn peptidases"/>
    <property type="match status" value="1"/>
</dbReference>
<dbReference type="HAMAP" id="MF_00550">
    <property type="entry name" value="Aminopeptidase_M20"/>
    <property type="match status" value="1"/>
</dbReference>
<dbReference type="InterPro" id="IPR001261">
    <property type="entry name" value="ArgE/DapE_CS"/>
</dbReference>
<dbReference type="InterPro" id="IPR036264">
    <property type="entry name" value="Bact_exopeptidase_dim_dom"/>
</dbReference>
<dbReference type="InterPro" id="IPR002933">
    <property type="entry name" value="Peptidase_M20"/>
</dbReference>
<dbReference type="InterPro" id="IPR011650">
    <property type="entry name" value="Peptidase_M20_dimer"/>
</dbReference>
<dbReference type="InterPro" id="IPR010161">
    <property type="entry name" value="Peptidase_M20B"/>
</dbReference>
<dbReference type="NCBIfam" id="TIGR01882">
    <property type="entry name" value="peptidase-T"/>
    <property type="match status" value="1"/>
</dbReference>
<dbReference type="NCBIfam" id="NF003976">
    <property type="entry name" value="PRK05469.1"/>
    <property type="match status" value="1"/>
</dbReference>
<dbReference type="NCBIfam" id="NF009920">
    <property type="entry name" value="PRK13381.1"/>
    <property type="match status" value="1"/>
</dbReference>
<dbReference type="PANTHER" id="PTHR42994">
    <property type="entry name" value="PEPTIDASE T"/>
    <property type="match status" value="1"/>
</dbReference>
<dbReference type="PANTHER" id="PTHR42994:SF1">
    <property type="entry name" value="PEPTIDASE T"/>
    <property type="match status" value="1"/>
</dbReference>
<dbReference type="Pfam" id="PF07687">
    <property type="entry name" value="M20_dimer"/>
    <property type="match status" value="1"/>
</dbReference>
<dbReference type="Pfam" id="PF01546">
    <property type="entry name" value="Peptidase_M20"/>
    <property type="match status" value="1"/>
</dbReference>
<dbReference type="PIRSF" id="PIRSF037215">
    <property type="entry name" value="Peptidase_M20B"/>
    <property type="match status" value="1"/>
</dbReference>
<dbReference type="SUPFAM" id="SSF55031">
    <property type="entry name" value="Bacterial exopeptidase dimerisation domain"/>
    <property type="match status" value="1"/>
</dbReference>
<dbReference type="SUPFAM" id="SSF53187">
    <property type="entry name" value="Zn-dependent exopeptidases"/>
    <property type="match status" value="1"/>
</dbReference>
<dbReference type="PROSITE" id="PS00758">
    <property type="entry name" value="ARGE_DAPE_CPG2_1"/>
    <property type="match status" value="1"/>
</dbReference>
<dbReference type="PROSITE" id="PS00759">
    <property type="entry name" value="ARGE_DAPE_CPG2_2"/>
    <property type="match status" value="1"/>
</dbReference>
<proteinExistence type="evidence at protein level"/>
<reference key="1">
    <citation type="journal article" date="2003" name="Nature">
        <title>The genome sequence of Bacillus anthracis Ames and comparison to closely related bacteria.</title>
        <authorList>
            <person name="Read T.D."/>
            <person name="Peterson S.N."/>
            <person name="Tourasse N.J."/>
            <person name="Baillie L.W."/>
            <person name="Paulsen I.T."/>
            <person name="Nelson K.E."/>
            <person name="Tettelin H."/>
            <person name="Fouts D.E."/>
            <person name="Eisen J.A."/>
            <person name="Gill S.R."/>
            <person name="Holtzapple E.K."/>
            <person name="Okstad O.A."/>
            <person name="Helgason E."/>
            <person name="Rilstone J."/>
            <person name="Wu M."/>
            <person name="Kolonay J.F."/>
            <person name="Beanan M.J."/>
            <person name="Dodson R.J."/>
            <person name="Brinkac L.M."/>
            <person name="Gwinn M.L."/>
            <person name="DeBoy R.T."/>
            <person name="Madpu R."/>
            <person name="Daugherty S.C."/>
            <person name="Durkin A.S."/>
            <person name="Haft D.H."/>
            <person name="Nelson W.C."/>
            <person name="Peterson J.D."/>
            <person name="Pop M."/>
            <person name="Khouri H.M."/>
            <person name="Radune D."/>
            <person name="Benton J.L."/>
            <person name="Mahamoud Y."/>
            <person name="Jiang L."/>
            <person name="Hance I.R."/>
            <person name="Weidman J.F."/>
            <person name="Berry K.J."/>
            <person name="Plaut R.D."/>
            <person name="Wolf A.M."/>
            <person name="Watkins K.L."/>
            <person name="Nierman W.C."/>
            <person name="Hazen A."/>
            <person name="Cline R.T."/>
            <person name="Redmond C."/>
            <person name="Thwaite J.E."/>
            <person name="White O."/>
            <person name="Salzberg S.L."/>
            <person name="Thomason B."/>
            <person name="Friedlander A.M."/>
            <person name="Koehler T.M."/>
            <person name="Hanna P.C."/>
            <person name="Kolstoe A.-B."/>
            <person name="Fraser C.M."/>
        </authorList>
    </citation>
    <scope>NUCLEOTIDE SEQUENCE [LARGE SCALE GENOMIC DNA]</scope>
    <source>
        <strain>Ames / isolate Porton</strain>
    </source>
</reference>
<reference key="2">
    <citation type="journal article" date="2009" name="J. Bacteriol.">
        <title>The complete genome sequence of Bacillus anthracis Ames 'Ancestor'.</title>
        <authorList>
            <person name="Ravel J."/>
            <person name="Jiang L."/>
            <person name="Stanley S.T."/>
            <person name="Wilson M.R."/>
            <person name="Decker R.S."/>
            <person name="Read T.D."/>
            <person name="Worsham P."/>
            <person name="Keim P.S."/>
            <person name="Salzberg S.L."/>
            <person name="Fraser-Liggett C.M."/>
            <person name="Rasko D.A."/>
        </authorList>
    </citation>
    <scope>NUCLEOTIDE SEQUENCE [LARGE SCALE GENOMIC DNA]</scope>
    <source>
        <strain>Ames ancestor</strain>
    </source>
</reference>
<reference key="3">
    <citation type="submission" date="2004-01" db="EMBL/GenBank/DDBJ databases">
        <title>Complete genome sequence of Bacillus anthracis Sterne.</title>
        <authorList>
            <person name="Brettin T.S."/>
            <person name="Bruce D."/>
            <person name="Challacombe J.F."/>
            <person name="Gilna P."/>
            <person name="Han C."/>
            <person name="Hill K."/>
            <person name="Hitchcock P."/>
            <person name="Jackson P."/>
            <person name="Keim P."/>
            <person name="Longmire J."/>
            <person name="Lucas S."/>
            <person name="Okinaka R."/>
            <person name="Richardson P."/>
            <person name="Rubin E."/>
            <person name="Tice H."/>
        </authorList>
    </citation>
    <scope>NUCLEOTIDE SEQUENCE [LARGE SCALE GENOMIC DNA]</scope>
    <source>
        <strain>Sterne</strain>
    </source>
</reference>
<protein>
    <recommendedName>
        <fullName evidence="1">Peptidase T</fullName>
        <ecNumber evidence="1">3.4.11.4</ecNumber>
    </recommendedName>
    <alternativeName>
        <fullName evidence="1">Aminotripeptidase</fullName>
        <shortName evidence="1">Tripeptidase</shortName>
    </alternativeName>
    <alternativeName>
        <fullName evidence="1">Tripeptide aminopeptidase</fullName>
    </alternativeName>
</protein>
<gene>
    <name evidence="1" type="primary">pepT</name>
    <name type="synonym">pepT-1</name>
    <name type="ordered locus">BA_3872</name>
    <name type="ordered locus">GBAA_3872</name>
    <name type="ordered locus">BAS3588</name>
</gene>
<evidence type="ECO:0000255" key="1">
    <source>
        <dbReference type="HAMAP-Rule" id="MF_00550"/>
    </source>
</evidence>
<evidence type="ECO:0007829" key="2">
    <source>
        <dbReference type="PDB" id="3IFE"/>
    </source>
</evidence>